<dbReference type="EMBL" id="CU928176">
    <property type="protein sequence ID" value="CAR28170.1"/>
    <property type="molecule type" value="Genomic_DNA"/>
</dbReference>
<dbReference type="RefSeq" id="XP_002497103.1">
    <property type="nucleotide sequence ID" value="XM_002497058.1"/>
</dbReference>
<dbReference type="SMR" id="C5DWK1"/>
<dbReference type="FunCoup" id="C5DWK1">
    <property type="interactions" value="20"/>
</dbReference>
<dbReference type="STRING" id="559307.C5DWK1"/>
<dbReference type="GeneID" id="8204370"/>
<dbReference type="KEGG" id="zro:ZYRO0D15488g"/>
<dbReference type="HOGENOM" id="CLU_054606_1_0_1"/>
<dbReference type="InParanoid" id="C5DWK1"/>
<dbReference type="Proteomes" id="UP000008536">
    <property type="component" value="Chromosome D"/>
</dbReference>
<dbReference type="GO" id="GO:0005737">
    <property type="term" value="C:cytoplasm"/>
    <property type="evidence" value="ECO:0007669"/>
    <property type="project" value="UniProtKB-SubCell"/>
</dbReference>
<dbReference type="GO" id="GO:0031965">
    <property type="term" value="C:nuclear membrane"/>
    <property type="evidence" value="ECO:0007669"/>
    <property type="project" value="TreeGrafter"/>
</dbReference>
<dbReference type="GO" id="GO:0070628">
    <property type="term" value="F:proteasome binding"/>
    <property type="evidence" value="ECO:0007669"/>
    <property type="project" value="TreeGrafter"/>
</dbReference>
<dbReference type="GO" id="GO:0071630">
    <property type="term" value="P:nuclear protein quality control by the ubiquitin-proteasome system"/>
    <property type="evidence" value="ECO:0007669"/>
    <property type="project" value="InterPro"/>
</dbReference>
<dbReference type="GO" id="GO:0031144">
    <property type="term" value="P:proteasome localization"/>
    <property type="evidence" value="ECO:0007669"/>
    <property type="project" value="InterPro"/>
</dbReference>
<dbReference type="GO" id="GO:0015031">
    <property type="term" value="P:protein transport"/>
    <property type="evidence" value="ECO:0007669"/>
    <property type="project" value="UniProtKB-KW"/>
</dbReference>
<dbReference type="Gene3D" id="1.20.58.1590">
    <property type="entry name" value="Tethering factor for nuclear proteasome Cut8/Sts1"/>
    <property type="match status" value="1"/>
</dbReference>
<dbReference type="InterPro" id="IPR013868">
    <property type="entry name" value="Cut8/Sts1_fam"/>
</dbReference>
<dbReference type="InterPro" id="IPR038422">
    <property type="entry name" value="Cut8/Sts1_sf"/>
</dbReference>
<dbReference type="PANTHER" id="PTHR28032">
    <property type="entry name" value="FI02826P"/>
    <property type="match status" value="1"/>
</dbReference>
<dbReference type="PANTHER" id="PTHR28032:SF1">
    <property type="entry name" value="FI02826P"/>
    <property type="match status" value="1"/>
</dbReference>
<dbReference type="Pfam" id="PF08559">
    <property type="entry name" value="Cut8"/>
    <property type="match status" value="1"/>
</dbReference>
<feature type="chain" id="PRO_0000409444" description="Tethering factor for nuclear proteasome STS1">
    <location>
        <begin position="1"/>
        <end position="326"/>
    </location>
</feature>
<feature type="region of interest" description="Disordered" evidence="2">
    <location>
        <begin position="51"/>
        <end position="75"/>
    </location>
</feature>
<feature type="region of interest" description="Disordered" evidence="2">
    <location>
        <begin position="300"/>
        <end position="326"/>
    </location>
</feature>
<evidence type="ECO:0000250" key="1"/>
<evidence type="ECO:0000256" key="2">
    <source>
        <dbReference type="SAM" id="MobiDB-lite"/>
    </source>
</evidence>
<evidence type="ECO:0000305" key="3"/>
<reference key="1">
    <citation type="journal article" date="2009" name="Genome Res.">
        <title>Comparative genomics of protoploid Saccharomycetaceae.</title>
        <authorList>
            <consortium name="The Genolevures Consortium"/>
            <person name="Souciet J.-L."/>
            <person name="Dujon B."/>
            <person name="Gaillardin C."/>
            <person name="Johnston M."/>
            <person name="Baret P.V."/>
            <person name="Cliften P."/>
            <person name="Sherman D.J."/>
            <person name="Weissenbach J."/>
            <person name="Westhof E."/>
            <person name="Wincker P."/>
            <person name="Jubin C."/>
            <person name="Poulain J."/>
            <person name="Barbe V."/>
            <person name="Segurens B."/>
            <person name="Artiguenave F."/>
            <person name="Anthouard V."/>
            <person name="Vacherie B."/>
            <person name="Val M.-E."/>
            <person name="Fulton R.S."/>
            <person name="Minx P."/>
            <person name="Wilson R."/>
            <person name="Durrens P."/>
            <person name="Jean G."/>
            <person name="Marck C."/>
            <person name="Martin T."/>
            <person name="Nikolski M."/>
            <person name="Rolland T."/>
            <person name="Seret M.-L."/>
            <person name="Casaregola S."/>
            <person name="Despons L."/>
            <person name="Fairhead C."/>
            <person name="Fischer G."/>
            <person name="Lafontaine I."/>
            <person name="Leh V."/>
            <person name="Lemaire M."/>
            <person name="de Montigny J."/>
            <person name="Neuveglise C."/>
            <person name="Thierry A."/>
            <person name="Blanc-Lenfle I."/>
            <person name="Bleykasten C."/>
            <person name="Diffels J."/>
            <person name="Fritsch E."/>
            <person name="Frangeul L."/>
            <person name="Goeffon A."/>
            <person name="Jauniaux N."/>
            <person name="Kachouri-Lafond R."/>
            <person name="Payen C."/>
            <person name="Potier S."/>
            <person name="Pribylova L."/>
            <person name="Ozanne C."/>
            <person name="Richard G.-F."/>
            <person name="Sacerdot C."/>
            <person name="Straub M.-L."/>
            <person name="Talla E."/>
        </authorList>
    </citation>
    <scope>NUCLEOTIDE SEQUENCE [LARGE SCALE GENOMIC DNA]</scope>
    <source>
        <strain>ATCC 2623 / CBS 732 / BCRC 21506 / NBRC 1130 / NCYC 568 / NRRL Y-229</strain>
    </source>
</reference>
<gene>
    <name type="primary">STS1</name>
    <name type="ordered locus">ZYRO0D15488g</name>
</gene>
<proteinExistence type="inferred from homology"/>
<sequence length="326" mass="37640">MENNTAVLGAGFSWGFKSDNVMKCQEQEEQQARENEKSLNSMVANLVQAQGMDPKGRKRRLDEPTNPQPQMMVPPRKYNVSKRRPHHSTISGQPLPLHRGLELMSKDQLQYILIEVMKNYPISQQLVQNKLVDFNFSIEKCEILLKEKLQQLHESIPYSRSHDYQRLSDYAFVRMKPHILEFLNCLVDCVLDRIPPRVDNLHESLKILDMTTDMVTKLPRFQLASNNYYYDKCLEQLACLWCTVIEHIARDVIMTVNDAPLLRNWIQKLELYNELCHGILTKPLNQFKSLAVVDAGVTDSNSTKGTNATRNRWSGSTDNYTVGDNQ</sequence>
<keyword id="KW-0963">Cytoplasm</keyword>
<keyword id="KW-0539">Nucleus</keyword>
<keyword id="KW-0653">Protein transport</keyword>
<keyword id="KW-1185">Reference proteome</keyword>
<keyword id="KW-0813">Transport</keyword>
<name>STS1_ZYGRC</name>
<accession>C5DWK1</accession>
<organism>
    <name type="scientific">Zygosaccharomyces rouxii (strain ATCC 2623 / CBS 732 / NBRC 1130 / NCYC 568 / NRRL Y-229)</name>
    <dbReference type="NCBI Taxonomy" id="559307"/>
    <lineage>
        <taxon>Eukaryota</taxon>
        <taxon>Fungi</taxon>
        <taxon>Dikarya</taxon>
        <taxon>Ascomycota</taxon>
        <taxon>Saccharomycotina</taxon>
        <taxon>Saccharomycetes</taxon>
        <taxon>Saccharomycetales</taxon>
        <taxon>Saccharomycetaceae</taxon>
        <taxon>Zygosaccharomyces</taxon>
    </lineage>
</organism>
<protein>
    <recommendedName>
        <fullName>Tethering factor for nuclear proteasome STS1</fullName>
    </recommendedName>
</protein>
<comment type="function">
    <text evidence="1">Involved in ubiquitin-mediated protein degradation. Regulatory factor in the ubiquitin/proteasome pathway that controls the turnover of proteasome substrates. Targets proteasomes to the nucleus and facilitates the degradation of nuclear proteins (By similarity).</text>
</comment>
<comment type="subunit">
    <text evidence="1">Binds the proteasome.</text>
</comment>
<comment type="subcellular location">
    <subcellularLocation>
        <location evidence="1">Cytoplasm</location>
    </subcellularLocation>
    <subcellularLocation>
        <location evidence="1">Nucleus</location>
    </subcellularLocation>
</comment>
<comment type="similarity">
    <text evidence="3">Belongs to the cut8/STS1 family.</text>
</comment>